<protein>
    <recommendedName>
        <fullName>Homeobox protein knotted-1-like 1</fullName>
    </recommendedName>
</protein>
<comment type="subcellular location">
    <subcellularLocation>
        <location evidence="3">Nucleus</location>
    </subcellularLocation>
</comment>
<comment type="tissue specificity">
    <text>Highly expressed in the roots.</text>
</comment>
<comment type="similarity">
    <text evidence="2">Belongs to the TALE/KNOX homeobox family.</text>
</comment>
<keyword id="KW-0238">DNA-binding</keyword>
<keyword id="KW-0371">Homeobox</keyword>
<keyword id="KW-0539">Nucleus</keyword>
<keyword id="KW-1185">Reference proteome</keyword>
<dbReference type="SMR" id="P56659"/>
<dbReference type="STRING" id="4577.P56659"/>
<dbReference type="PaxDb" id="4577-GRMZM2G159431_P01"/>
<dbReference type="eggNOG" id="KOG0773">
    <property type="taxonomic scope" value="Eukaryota"/>
</dbReference>
<dbReference type="InParanoid" id="P56659"/>
<dbReference type="Proteomes" id="UP000007305">
    <property type="component" value="Unplaced"/>
</dbReference>
<dbReference type="ExpressionAtlas" id="P56659">
    <property type="expression patterns" value="baseline and differential"/>
</dbReference>
<dbReference type="GO" id="GO:0005634">
    <property type="term" value="C:nucleus"/>
    <property type="evidence" value="ECO:0000318"/>
    <property type="project" value="GO_Central"/>
</dbReference>
<dbReference type="GO" id="GO:0003677">
    <property type="term" value="F:DNA binding"/>
    <property type="evidence" value="ECO:0007669"/>
    <property type="project" value="UniProtKB-KW"/>
</dbReference>
<dbReference type="GO" id="GO:0006355">
    <property type="term" value="P:regulation of DNA-templated transcription"/>
    <property type="evidence" value="ECO:0007669"/>
    <property type="project" value="InterPro"/>
</dbReference>
<dbReference type="CDD" id="cd00086">
    <property type="entry name" value="homeodomain"/>
    <property type="match status" value="1"/>
</dbReference>
<dbReference type="FunFam" id="1.10.10.60:FF:000143">
    <property type="entry name" value="homeobox protein knotted-1-like 3 isoform X1"/>
    <property type="match status" value="1"/>
</dbReference>
<dbReference type="Gene3D" id="1.10.10.60">
    <property type="entry name" value="Homeodomain-like"/>
    <property type="match status" value="1"/>
</dbReference>
<dbReference type="InterPro" id="IPR005539">
    <property type="entry name" value="ELK_dom"/>
</dbReference>
<dbReference type="InterPro" id="IPR001356">
    <property type="entry name" value="HD"/>
</dbReference>
<dbReference type="InterPro" id="IPR009057">
    <property type="entry name" value="Homeodomain-like_sf"/>
</dbReference>
<dbReference type="InterPro" id="IPR008422">
    <property type="entry name" value="KN_HD"/>
</dbReference>
<dbReference type="InterPro" id="IPR050224">
    <property type="entry name" value="TALE_homeobox"/>
</dbReference>
<dbReference type="PANTHER" id="PTHR11850">
    <property type="entry name" value="HOMEOBOX PROTEIN TRANSCRIPTION FACTORS"/>
    <property type="match status" value="1"/>
</dbReference>
<dbReference type="Pfam" id="PF05920">
    <property type="entry name" value="Homeobox_KN"/>
    <property type="match status" value="1"/>
</dbReference>
<dbReference type="SMART" id="SM00389">
    <property type="entry name" value="HOX"/>
    <property type="match status" value="1"/>
</dbReference>
<dbReference type="SUPFAM" id="SSF46689">
    <property type="entry name" value="Homeodomain-like"/>
    <property type="match status" value="1"/>
</dbReference>
<dbReference type="PROSITE" id="PS51213">
    <property type="entry name" value="ELK"/>
    <property type="match status" value="1"/>
</dbReference>
<dbReference type="PROSITE" id="PS00027">
    <property type="entry name" value="HOMEOBOX_1"/>
    <property type="match status" value="1"/>
</dbReference>
<dbReference type="PROSITE" id="PS50071">
    <property type="entry name" value="HOMEOBOX_2"/>
    <property type="match status" value="1"/>
</dbReference>
<gene>
    <name type="primary">KNOX1</name>
</gene>
<proteinExistence type="evidence at transcript level"/>
<accession>P56659</accession>
<name>KNOX1_MAIZE</name>
<feature type="chain" id="PRO_0000048962" description="Homeobox protein knotted-1-like 1">
    <location>
        <begin position="1" status="less than"/>
        <end position="88" status="greater than"/>
    </location>
</feature>
<feature type="domain" description="ELK" evidence="2">
    <location>
        <begin position="4"/>
        <end position="24"/>
    </location>
</feature>
<feature type="DNA-binding region" description="Homeobox; TALE-type" evidence="1">
    <location>
        <begin position="25"/>
        <end position="88"/>
    </location>
</feature>
<feature type="non-terminal residue">
    <location>
        <position position="1"/>
    </location>
</feature>
<feature type="non-terminal residue">
    <location>
        <position position="88"/>
    </location>
</feature>
<sequence>VRQELKLELKQGFKSRIEDVREEILRKRRAGKLPGDTTSILKQWWQEHSKWPYPTEDDKAKLVEETGLQLKQINNWFINQRKRNWHNN</sequence>
<evidence type="ECO:0000255" key="1">
    <source>
        <dbReference type="PROSITE-ProRule" id="PRU00108"/>
    </source>
</evidence>
<evidence type="ECO:0000255" key="2">
    <source>
        <dbReference type="PROSITE-ProRule" id="PRU00559"/>
    </source>
</evidence>
<evidence type="ECO:0000305" key="3"/>
<reference key="1">
    <citation type="journal article" date="1994" name="Plant Cell">
        <title>Sequence analysis and expression patterns divide the Maize knotted1-like homeobox genes into two classes.</title>
        <authorList>
            <person name="Kerstetter R."/>
            <person name="Vollbrecht E."/>
            <person name="Lowe B."/>
            <person name="Veit B."/>
            <person name="Yamaguchi J."/>
            <person name="Hake S."/>
        </authorList>
    </citation>
    <scope>NUCLEOTIDE SEQUENCE</scope>
    <source>
        <tissue>Ear of corn</tissue>
        <tissue>Seedling</tissue>
    </source>
</reference>
<organism>
    <name type="scientific">Zea mays</name>
    <name type="common">Maize</name>
    <dbReference type="NCBI Taxonomy" id="4577"/>
    <lineage>
        <taxon>Eukaryota</taxon>
        <taxon>Viridiplantae</taxon>
        <taxon>Streptophyta</taxon>
        <taxon>Embryophyta</taxon>
        <taxon>Tracheophyta</taxon>
        <taxon>Spermatophyta</taxon>
        <taxon>Magnoliopsida</taxon>
        <taxon>Liliopsida</taxon>
        <taxon>Poales</taxon>
        <taxon>Poaceae</taxon>
        <taxon>PACMAD clade</taxon>
        <taxon>Panicoideae</taxon>
        <taxon>Andropogonodae</taxon>
        <taxon>Andropogoneae</taxon>
        <taxon>Tripsacinae</taxon>
        <taxon>Zea</taxon>
    </lineage>
</organism>